<keyword id="KW-0963">Cytoplasm</keyword>
<keyword id="KW-0238">DNA-binding</keyword>
<keyword id="KW-0678">Repressor</keyword>
<keyword id="KW-0804">Transcription</keyword>
<keyword id="KW-0805">Transcription regulation</keyword>
<organism>
    <name type="scientific">Salmonella paratyphi B (strain ATCC BAA-1250 / SPB7)</name>
    <dbReference type="NCBI Taxonomy" id="1016998"/>
    <lineage>
        <taxon>Bacteria</taxon>
        <taxon>Pseudomonadati</taxon>
        <taxon>Pseudomonadota</taxon>
        <taxon>Gammaproteobacteria</taxon>
        <taxon>Enterobacterales</taxon>
        <taxon>Enterobacteriaceae</taxon>
        <taxon>Salmonella</taxon>
    </lineage>
</organism>
<evidence type="ECO:0000250" key="1"/>
<evidence type="ECO:0000305" key="2"/>
<name>RCNR_SALPB</name>
<gene>
    <name type="primary">rcnR</name>
    <name type="ordered locus">SPAB_03764</name>
</gene>
<dbReference type="EMBL" id="CP000886">
    <property type="protein sequence ID" value="ABX69097.1"/>
    <property type="molecule type" value="Genomic_DNA"/>
</dbReference>
<dbReference type="RefSeq" id="WP_000019953.1">
    <property type="nucleotide sequence ID" value="NC_010102.1"/>
</dbReference>
<dbReference type="SMR" id="A9N3J4"/>
<dbReference type="KEGG" id="spq:SPAB_03764"/>
<dbReference type="PATRIC" id="fig|1016998.12.peg.3544"/>
<dbReference type="HOGENOM" id="CLU_130332_3_0_6"/>
<dbReference type="BioCyc" id="SENT1016998:SPAB_RS15320-MONOMER"/>
<dbReference type="Proteomes" id="UP000008556">
    <property type="component" value="Chromosome"/>
</dbReference>
<dbReference type="GO" id="GO:0005737">
    <property type="term" value="C:cytoplasm"/>
    <property type="evidence" value="ECO:0007669"/>
    <property type="project" value="UniProtKB-SubCell"/>
</dbReference>
<dbReference type="GO" id="GO:0003677">
    <property type="term" value="F:DNA binding"/>
    <property type="evidence" value="ECO:0007669"/>
    <property type="project" value="UniProtKB-KW"/>
</dbReference>
<dbReference type="GO" id="GO:0046872">
    <property type="term" value="F:metal ion binding"/>
    <property type="evidence" value="ECO:0007669"/>
    <property type="project" value="InterPro"/>
</dbReference>
<dbReference type="GO" id="GO:0045892">
    <property type="term" value="P:negative regulation of DNA-templated transcription"/>
    <property type="evidence" value="ECO:0007669"/>
    <property type="project" value="UniProtKB-ARBA"/>
</dbReference>
<dbReference type="CDD" id="cd10153">
    <property type="entry name" value="RcnR-FrmR-like_DUF156"/>
    <property type="match status" value="1"/>
</dbReference>
<dbReference type="FunFam" id="1.20.58.1000:FF:000001">
    <property type="entry name" value="Transcriptional repressor RcnR"/>
    <property type="match status" value="1"/>
</dbReference>
<dbReference type="Gene3D" id="1.20.58.1000">
    <property type="entry name" value="Metal-sensitive repressor, helix protomer"/>
    <property type="match status" value="1"/>
</dbReference>
<dbReference type="InterPro" id="IPR003735">
    <property type="entry name" value="Metal_Tscrpt_repr"/>
</dbReference>
<dbReference type="InterPro" id="IPR038390">
    <property type="entry name" value="Metal_Tscrpt_repr_sf"/>
</dbReference>
<dbReference type="NCBIfam" id="NF011613">
    <property type="entry name" value="PRK15039.1"/>
    <property type="match status" value="1"/>
</dbReference>
<dbReference type="PANTHER" id="PTHR33677">
    <property type="entry name" value="TRANSCRIPTIONAL REPRESSOR FRMR-RELATED"/>
    <property type="match status" value="1"/>
</dbReference>
<dbReference type="PANTHER" id="PTHR33677:SF1">
    <property type="entry name" value="TRANSCRIPTIONAL REPRESSOR RCNR"/>
    <property type="match status" value="1"/>
</dbReference>
<dbReference type="Pfam" id="PF02583">
    <property type="entry name" value="Trns_repr_metal"/>
    <property type="match status" value="1"/>
</dbReference>
<protein>
    <recommendedName>
        <fullName>Transcriptional repressor RcnR</fullName>
    </recommendedName>
</protein>
<feature type="chain" id="PRO_0000332701" description="Transcriptional repressor RcnR">
    <location>
        <begin position="1"/>
        <end position="90"/>
    </location>
</feature>
<comment type="function">
    <text evidence="1">Repressor of rcnA expression. Acts by binding specifically to the rcnA promoter in the absence of nickel and cobalt. In the presence of one of these metals, it has a weaker affinity for rcnA promoter (By similarity).</text>
</comment>
<comment type="subcellular location">
    <subcellularLocation>
        <location evidence="2">Cytoplasm</location>
    </subcellularLocation>
</comment>
<comment type="similarity">
    <text evidence="2">Belongs to the FrmR/RcnR family.</text>
</comment>
<sequence length="90" mass="10208">MSHTIRDKQKLKARTSKIQGQVIALKKMLDEPHECAAVLQQIAAIRGAVNGLMREVIKGHLTEHIVHQSDEARREEDLDVILKVLDSYIK</sequence>
<reference key="1">
    <citation type="submission" date="2007-11" db="EMBL/GenBank/DDBJ databases">
        <authorList>
            <consortium name="The Salmonella enterica serovar Paratyphi B Genome Sequencing Project"/>
            <person name="McClelland M."/>
            <person name="Sanderson E.K."/>
            <person name="Porwollik S."/>
            <person name="Spieth J."/>
            <person name="Clifton W.S."/>
            <person name="Fulton R."/>
            <person name="Cordes M."/>
            <person name="Wollam A."/>
            <person name="Shah N."/>
            <person name="Pepin K."/>
            <person name="Bhonagiri V."/>
            <person name="Nash W."/>
            <person name="Johnson M."/>
            <person name="Thiruvilangam P."/>
            <person name="Wilson R."/>
        </authorList>
    </citation>
    <scope>NUCLEOTIDE SEQUENCE [LARGE SCALE GENOMIC DNA]</scope>
    <source>
        <strain>ATCC BAA-1250 / SPB7</strain>
    </source>
</reference>
<accession>A9N3J4</accession>
<proteinExistence type="inferred from homology"/>